<proteinExistence type="inferred from homology"/>
<comment type="function">
    <text evidence="1">Chaperone involved in the maturation of iron-sulfur cluster-containing proteins. Has a low intrinsic ATPase activity which is markedly stimulated by HscB. Involved in the maturation of IscU.</text>
</comment>
<comment type="similarity">
    <text evidence="1">Belongs to the heat shock protein 70 family.</text>
</comment>
<dbReference type="EMBL" id="CP000802">
    <property type="protein sequence ID" value="ABV06936.1"/>
    <property type="molecule type" value="Genomic_DNA"/>
</dbReference>
<dbReference type="RefSeq" id="WP_001196613.1">
    <property type="nucleotide sequence ID" value="NC_009800.1"/>
</dbReference>
<dbReference type="SMR" id="A8A332"/>
<dbReference type="GeneID" id="93774610"/>
<dbReference type="KEGG" id="ecx:EcHS_A2677"/>
<dbReference type="HOGENOM" id="CLU_005965_2_1_6"/>
<dbReference type="GO" id="GO:0005524">
    <property type="term" value="F:ATP binding"/>
    <property type="evidence" value="ECO:0007669"/>
    <property type="project" value="UniProtKB-KW"/>
</dbReference>
<dbReference type="GO" id="GO:0016887">
    <property type="term" value="F:ATP hydrolysis activity"/>
    <property type="evidence" value="ECO:0007669"/>
    <property type="project" value="UniProtKB-UniRule"/>
</dbReference>
<dbReference type="GO" id="GO:0140662">
    <property type="term" value="F:ATP-dependent protein folding chaperone"/>
    <property type="evidence" value="ECO:0007669"/>
    <property type="project" value="InterPro"/>
</dbReference>
<dbReference type="GO" id="GO:0051082">
    <property type="term" value="F:unfolded protein binding"/>
    <property type="evidence" value="ECO:0007669"/>
    <property type="project" value="InterPro"/>
</dbReference>
<dbReference type="GO" id="GO:0016226">
    <property type="term" value="P:iron-sulfur cluster assembly"/>
    <property type="evidence" value="ECO:0007669"/>
    <property type="project" value="InterPro"/>
</dbReference>
<dbReference type="CDD" id="cd10236">
    <property type="entry name" value="ASKHA_NBD_HSP70_HscA"/>
    <property type="match status" value="1"/>
</dbReference>
<dbReference type="FunFam" id="1.20.1270.10:FF:000006">
    <property type="entry name" value="Chaperone protein HscA"/>
    <property type="match status" value="1"/>
</dbReference>
<dbReference type="FunFam" id="3.30.420.40:FF:000046">
    <property type="entry name" value="Chaperone protein HscA"/>
    <property type="match status" value="1"/>
</dbReference>
<dbReference type="FunFam" id="3.90.640.10:FF:000013">
    <property type="entry name" value="Chaperone protein HscA"/>
    <property type="match status" value="1"/>
</dbReference>
<dbReference type="FunFam" id="2.60.34.10:FF:000005">
    <property type="entry name" value="Chaperone protein HscA homolog"/>
    <property type="match status" value="1"/>
</dbReference>
<dbReference type="FunFam" id="3.30.420.40:FF:000020">
    <property type="entry name" value="Chaperone protein HscA homolog"/>
    <property type="match status" value="1"/>
</dbReference>
<dbReference type="Gene3D" id="1.20.1270.10">
    <property type="match status" value="1"/>
</dbReference>
<dbReference type="Gene3D" id="3.30.420.40">
    <property type="match status" value="2"/>
</dbReference>
<dbReference type="Gene3D" id="3.90.640.10">
    <property type="entry name" value="Actin, Chain A, domain 4"/>
    <property type="match status" value="1"/>
</dbReference>
<dbReference type="Gene3D" id="2.60.34.10">
    <property type="entry name" value="Substrate Binding Domain Of DNAk, Chain A, domain 1"/>
    <property type="match status" value="1"/>
</dbReference>
<dbReference type="HAMAP" id="MF_00679">
    <property type="entry name" value="HscA"/>
    <property type="match status" value="1"/>
</dbReference>
<dbReference type="InterPro" id="IPR043129">
    <property type="entry name" value="ATPase_NBD"/>
</dbReference>
<dbReference type="InterPro" id="IPR018181">
    <property type="entry name" value="Heat_shock_70_CS"/>
</dbReference>
<dbReference type="InterPro" id="IPR042039">
    <property type="entry name" value="HscA_NBD"/>
</dbReference>
<dbReference type="InterPro" id="IPR029048">
    <property type="entry name" value="HSP70_C_sf"/>
</dbReference>
<dbReference type="InterPro" id="IPR029047">
    <property type="entry name" value="HSP70_peptide-bd_sf"/>
</dbReference>
<dbReference type="InterPro" id="IPR013126">
    <property type="entry name" value="Hsp_70_fam"/>
</dbReference>
<dbReference type="InterPro" id="IPR010236">
    <property type="entry name" value="ISC_FeS_clus_asmbl_HscA"/>
</dbReference>
<dbReference type="NCBIfam" id="TIGR01991">
    <property type="entry name" value="HscA"/>
    <property type="match status" value="1"/>
</dbReference>
<dbReference type="NCBIfam" id="NF003520">
    <property type="entry name" value="PRK05183.1"/>
    <property type="match status" value="1"/>
</dbReference>
<dbReference type="PANTHER" id="PTHR19375">
    <property type="entry name" value="HEAT SHOCK PROTEIN 70KDA"/>
    <property type="match status" value="1"/>
</dbReference>
<dbReference type="Pfam" id="PF00012">
    <property type="entry name" value="HSP70"/>
    <property type="match status" value="1"/>
</dbReference>
<dbReference type="PRINTS" id="PR00301">
    <property type="entry name" value="HEATSHOCK70"/>
</dbReference>
<dbReference type="SUPFAM" id="SSF53067">
    <property type="entry name" value="Actin-like ATPase domain"/>
    <property type="match status" value="2"/>
</dbReference>
<dbReference type="SUPFAM" id="SSF100934">
    <property type="entry name" value="Heat shock protein 70kD (HSP70), C-terminal subdomain"/>
    <property type="match status" value="1"/>
</dbReference>
<dbReference type="SUPFAM" id="SSF100920">
    <property type="entry name" value="Heat shock protein 70kD (HSP70), peptide-binding domain"/>
    <property type="match status" value="1"/>
</dbReference>
<dbReference type="PROSITE" id="PS00297">
    <property type="entry name" value="HSP70_1"/>
    <property type="match status" value="1"/>
</dbReference>
<dbReference type="PROSITE" id="PS00329">
    <property type="entry name" value="HSP70_2"/>
    <property type="match status" value="1"/>
</dbReference>
<dbReference type="PROSITE" id="PS01036">
    <property type="entry name" value="HSP70_3"/>
    <property type="match status" value="1"/>
</dbReference>
<reference key="1">
    <citation type="journal article" date="2008" name="J. Bacteriol.">
        <title>The pangenome structure of Escherichia coli: comparative genomic analysis of E. coli commensal and pathogenic isolates.</title>
        <authorList>
            <person name="Rasko D.A."/>
            <person name="Rosovitz M.J."/>
            <person name="Myers G.S.A."/>
            <person name="Mongodin E.F."/>
            <person name="Fricke W.F."/>
            <person name="Gajer P."/>
            <person name="Crabtree J."/>
            <person name="Sebaihia M."/>
            <person name="Thomson N.R."/>
            <person name="Chaudhuri R."/>
            <person name="Henderson I.R."/>
            <person name="Sperandio V."/>
            <person name="Ravel J."/>
        </authorList>
    </citation>
    <scope>NUCLEOTIDE SEQUENCE [LARGE SCALE GENOMIC DNA]</scope>
    <source>
        <strain>HS</strain>
    </source>
</reference>
<gene>
    <name evidence="1" type="primary">hscA</name>
    <name type="ordered locus">EcHS_A2677</name>
</gene>
<sequence length="616" mass="65652">MALLQISEPGLSAAPHQRRLAAGIDLGTTNSLVATVRSGQAETLADHEGRHLLPSVVHYQQQGHSVGYDARTNAALDTANTISSVKRLMGRSLADIQQRYPHLPYQFQASENGLPMIETAAGLLNPVRVSADILKALAARATEALAGELDGVVITVPAYFDDAQRQGTKDAARLAGLHVLRLLNEPTAAAIAYGLDSGQEGVIAVYDLGGGTFDISILRLSRGVFEVLATGGDSALGGDDFDHLLADYIREQAGIPDRSDNRVQRELLDAAIAAKIALSDADSVTVNVAGWQGEISREQFNELIAPLVKRTLLACRRALKDAGVEADEVLEVVMVGGSTRVPLVRERVGEFFGRPPLTSIDPDKVVAIGAAIQADILVGNKPDSEMLLLDVIPLSLGLETMGGLVEKVIPRNTTIPVARAQDFTTFKDGQTAMSIHVMQGERELVQDCRSLARFALRGIPALPAGGAHIRVTFQVDADGLLSVTAMEKSTGVEASIQVKPSYGLTDSEIASMIKDSMSYAEQDVKARMLAEQKVEAARVLESLHGALAADAALLSAAERQVIDDAAAHLSEVAQGDDVDAIEQAIKNVDKQTQDFAARRMDQSVRRALKGHSVDEV</sequence>
<accession>A8A332</accession>
<keyword id="KW-0067">ATP-binding</keyword>
<keyword id="KW-0143">Chaperone</keyword>
<keyword id="KW-0547">Nucleotide-binding</keyword>
<name>HSCA_ECOHS</name>
<organism>
    <name type="scientific">Escherichia coli O9:H4 (strain HS)</name>
    <dbReference type="NCBI Taxonomy" id="331112"/>
    <lineage>
        <taxon>Bacteria</taxon>
        <taxon>Pseudomonadati</taxon>
        <taxon>Pseudomonadota</taxon>
        <taxon>Gammaproteobacteria</taxon>
        <taxon>Enterobacterales</taxon>
        <taxon>Enterobacteriaceae</taxon>
        <taxon>Escherichia</taxon>
    </lineage>
</organism>
<feature type="chain" id="PRO_1000061966" description="Chaperone protein HscA">
    <location>
        <begin position="1"/>
        <end position="616"/>
    </location>
</feature>
<evidence type="ECO:0000255" key="1">
    <source>
        <dbReference type="HAMAP-Rule" id="MF_00679"/>
    </source>
</evidence>
<protein>
    <recommendedName>
        <fullName evidence="1">Chaperone protein HscA</fullName>
    </recommendedName>
    <alternativeName>
        <fullName evidence="1">Hsc66</fullName>
    </alternativeName>
</protein>